<accession>P38882</accession>
<accession>D3DLE4</accession>
<name>UTP9_YEAST</name>
<keyword id="KW-0002">3D-structure</keyword>
<keyword id="KW-0539">Nucleus</keyword>
<keyword id="KW-0597">Phosphoprotein</keyword>
<keyword id="KW-1185">Reference proteome</keyword>
<keyword id="KW-0687">Ribonucleoprotein</keyword>
<keyword id="KW-0690">Ribosome biogenesis</keyword>
<keyword id="KW-0698">rRNA processing</keyword>
<keyword id="KW-0804">Transcription</keyword>
<sequence length="575" mass="65271">MGSSLDLVASFSHDSTRFAFQASVAQKNNVDIYPLNETKDYVVNSSLVSHIDYETNDMKVSDVIFFGWCSDLIDTQSSNIKRKLDEDEGTGESSEQRCENFFVNGFPDGRIVVYSSNGKDIVNIIKNKKEILGADTDESDIWILDSDKVVKKLQYNNSKPLKTFTLVDGKDDEIVHFQILHQNGTLLVCIITKQMVYIVDPSKRRPSTKYSFEISDAVACEFSSDGKYLLIANNEELIAYDLKEDSKLIQSWPVQVKTLKTLDDLIMALTTDGKINNYKIGEADKVCSIVVNEDLEIIDFTPINSKQQVLISWLNVNEPNFESISLKEIETQGYITINKNEKNNADEADQKKLEEKEEEAQPEVQHEKKETETKINKKVSKSDQVEIANILSSHLEANSTEILDDLMSGSWTEPEIKKFILTKINTVDHLSKIFLTISKSITQNPWNEENLLPLWLKWLLTLKSGELNSIKDKHTKKNCKHLKSALRSSEEILPVLLGIQGRLEMLRRQAKLREDLAQLSMQEGEDDEIEVIEHSNVISNPLQDQASPVEKLEPDSIVYANGESDEFVDASEYKD</sequence>
<comment type="function">
    <text evidence="2 4">Involved in nucleolar processing of pre-18S ribosomal RNA. Required for optimal pre-ribosomal RNA transcription by RNA polymerase I together with a subset of U3 proteins required for transcription (t-UTPs).</text>
</comment>
<comment type="subunit">
    <text evidence="2 4">Interacts with snoRNA U3. Interacts with MPP10. Component of the ribosomal small subunit (SSU) processome composed of at least 40 protein subunits and snoRNA U3. In the absence of snoRNA3, forms a complex with other t-UTPs. This complex can associate with pre-18S ribosomal RNAs.</text>
</comment>
<comment type="interaction">
    <interactant intactId="EBI-24892">
        <id>P38882</id>
    </interactant>
    <interactant intactId="EBI-28183">
        <id>Q04305</id>
        <label>UTP15</label>
    </interactant>
    <organismsDiffer>false</organismsDiffer>
    <experiments>11</experiments>
</comment>
<comment type="interaction">
    <interactant intactId="EBI-24892">
        <id>P38882</id>
    </interactant>
    <interactant intactId="EBI-35712">
        <id>Q06679</id>
        <label>UTP4</label>
    </interactant>
    <organismsDiffer>false</organismsDiffer>
    <experiments>7</experiments>
</comment>
<comment type="interaction">
    <interactant intactId="EBI-24892">
        <id>P38882</id>
    </interactant>
    <interactant intactId="EBI-35844">
        <id>Q04177</id>
        <label>UTP5</label>
    </interactant>
    <organismsDiffer>false</organismsDiffer>
    <experiments>3</experiments>
</comment>
<comment type="interaction">
    <interactant intactId="EBI-24892">
        <id>P38882</id>
    </interactant>
    <interactant intactId="EBI-23301">
        <id>P53276</id>
        <label>UTP8</label>
    </interactant>
    <organismsDiffer>false</organismsDiffer>
    <experiments>7</experiments>
</comment>
<comment type="subcellular location">
    <subcellularLocation>
        <location evidence="2 4">Nucleus</location>
        <location evidence="2 4">Nucleolus</location>
    </subcellularLocation>
    <text>Associated with ribosomal chromatin, even in the absence of transcription.</text>
</comment>
<comment type="miscellaneous">
    <text evidence="3">Present with 20000 molecules/cell in log phase SD medium.</text>
</comment>
<protein>
    <recommendedName>
        <fullName>U3 small nucleolar RNA-associated protein 9</fullName>
        <shortName>U3 snoRNA-associated protein 9</shortName>
    </recommendedName>
    <alternativeName>
        <fullName>U three protein 9</fullName>
    </alternativeName>
    <alternativeName>
        <fullName>U3 protein 9 required for transcription</fullName>
    </alternativeName>
    <alternativeName>
        <fullName>t-UTP9</fullName>
    </alternativeName>
</protein>
<reference key="1">
    <citation type="journal article" date="1994" name="Science">
        <title>Complete nucleotide sequence of Saccharomyces cerevisiae chromosome VIII.</title>
        <authorList>
            <person name="Johnston M."/>
            <person name="Andrews S."/>
            <person name="Brinkman R."/>
            <person name="Cooper J."/>
            <person name="Ding H."/>
            <person name="Dover J."/>
            <person name="Du Z."/>
            <person name="Favello A."/>
            <person name="Fulton L."/>
            <person name="Gattung S."/>
            <person name="Geisel C."/>
            <person name="Kirsten J."/>
            <person name="Kucaba T."/>
            <person name="Hillier L.W."/>
            <person name="Jier M."/>
            <person name="Johnston L."/>
            <person name="Langston Y."/>
            <person name="Latreille P."/>
            <person name="Louis E.J."/>
            <person name="Macri C."/>
            <person name="Mardis E."/>
            <person name="Menezes S."/>
            <person name="Mouser L."/>
            <person name="Nhan M."/>
            <person name="Rifkin L."/>
            <person name="Riles L."/>
            <person name="St Peter H."/>
            <person name="Trevaskis E."/>
            <person name="Vaughan K."/>
            <person name="Vignati D."/>
            <person name="Wilcox L."/>
            <person name="Wohldman P."/>
            <person name="Waterston R."/>
            <person name="Wilson R."/>
            <person name="Vaudin M."/>
        </authorList>
    </citation>
    <scope>NUCLEOTIDE SEQUENCE [LARGE SCALE GENOMIC DNA]</scope>
    <source>
        <strain>ATCC 204508 / S288c</strain>
    </source>
</reference>
<reference key="2">
    <citation type="journal article" date="2014" name="G3 (Bethesda)">
        <title>The reference genome sequence of Saccharomyces cerevisiae: Then and now.</title>
        <authorList>
            <person name="Engel S.R."/>
            <person name="Dietrich F.S."/>
            <person name="Fisk D.G."/>
            <person name="Binkley G."/>
            <person name="Balakrishnan R."/>
            <person name="Costanzo M.C."/>
            <person name="Dwight S.S."/>
            <person name="Hitz B.C."/>
            <person name="Karra K."/>
            <person name="Nash R.S."/>
            <person name="Weng S."/>
            <person name="Wong E.D."/>
            <person name="Lloyd P."/>
            <person name="Skrzypek M.S."/>
            <person name="Miyasato S.R."/>
            <person name="Simison M."/>
            <person name="Cherry J.M."/>
        </authorList>
    </citation>
    <scope>GENOME REANNOTATION</scope>
    <source>
        <strain>ATCC 204508 / S288c</strain>
    </source>
</reference>
<reference key="3">
    <citation type="journal article" date="2002" name="Nature">
        <title>A large nucleolar U3 ribonucleoprotein required for 18S ribosomal RNA biogenesis.</title>
        <authorList>
            <person name="Dragon F."/>
            <person name="Gallagher J.E.G."/>
            <person name="Compagnone-Post P.A."/>
            <person name="Mitchell B.M."/>
            <person name="Porwancher K.A."/>
            <person name="Wehner K.A."/>
            <person name="Wormsley S."/>
            <person name="Settlage R.E."/>
            <person name="Shabanowitz J."/>
            <person name="Osheim Y."/>
            <person name="Beyer A.L."/>
            <person name="Hunt D.F."/>
            <person name="Baserga S.J."/>
        </authorList>
    </citation>
    <scope>FUNCTION</scope>
    <scope>INTERACTION WITH MPP10 AND SNORNA U3</scope>
    <scope>IDENTIFICATION IN SSU PROCESSOME BY MASS SPECTROMETRY</scope>
    <scope>SUBCELLULAR LOCATION</scope>
</reference>
<reference key="4">
    <citation type="journal article" date="2003" name="Mol. Cell">
        <title>Assigning function to yeast proteins by integration of technologies.</title>
        <authorList>
            <person name="Hazbun T.R."/>
            <person name="Malmstroem L."/>
            <person name="Anderson S."/>
            <person name="Graczyk B.J."/>
            <person name="Fox B."/>
            <person name="Riffle M."/>
            <person name="Sundin B.A."/>
            <person name="Aranda J.D."/>
            <person name="McDonald W.H."/>
            <person name="Chiu C.-H."/>
            <person name="Snydsman B.E."/>
            <person name="Bradley P."/>
            <person name="Muller E.G.D."/>
            <person name="Fields S."/>
            <person name="Baker D."/>
            <person name="Yates J.R. III"/>
            <person name="Davis T.N."/>
        </authorList>
    </citation>
    <scope>IDENTIFICATION BY MASS SPECTROMETRY</scope>
</reference>
<reference key="5">
    <citation type="journal article" date="2003" name="Nature">
        <title>Global analysis of protein expression in yeast.</title>
        <authorList>
            <person name="Ghaemmaghami S."/>
            <person name="Huh W.-K."/>
            <person name="Bower K."/>
            <person name="Howson R.W."/>
            <person name="Belle A."/>
            <person name="Dephoure N."/>
            <person name="O'Shea E.K."/>
            <person name="Weissman J.S."/>
        </authorList>
    </citation>
    <scope>LEVEL OF PROTEIN EXPRESSION [LARGE SCALE ANALYSIS]</scope>
</reference>
<reference key="6">
    <citation type="journal article" date="2004" name="Genes Dev.">
        <title>RNA polymerase I transcription and pre-rRNA processing are linked by specific SSU processome components.</title>
        <authorList>
            <person name="Gallagher J.E.G."/>
            <person name="Dunbar D.A."/>
            <person name="Granneman S."/>
            <person name="Mitchell B.M."/>
            <person name="Osheim Y."/>
            <person name="Beyer A.L."/>
            <person name="Baserga S.J."/>
        </authorList>
    </citation>
    <scope>FUNCTION</scope>
    <scope>IDENTIFICATION IN COMPLEX WITH OTHER T-UTPS</scope>
    <scope>SUBCELLULAR LOCATION</scope>
</reference>
<reference key="7">
    <citation type="journal article" date="2008" name="Mol. Cell. Proteomics">
        <title>A multidimensional chromatography technology for in-depth phosphoproteome analysis.</title>
        <authorList>
            <person name="Albuquerque C.P."/>
            <person name="Smolka M.B."/>
            <person name="Payne S.H."/>
            <person name="Bafna V."/>
            <person name="Eng J."/>
            <person name="Zhou H."/>
        </authorList>
    </citation>
    <scope>PHOSPHORYLATION [LARGE SCALE ANALYSIS] AT SER-547 AND SER-564</scope>
    <scope>IDENTIFICATION BY MASS SPECTROMETRY [LARGE SCALE ANALYSIS]</scope>
</reference>
<dbReference type="EMBL" id="U00030">
    <property type="protein sequence ID" value="AAB68369.1"/>
    <property type="molecule type" value="Genomic_DNA"/>
</dbReference>
<dbReference type="EMBL" id="BK006934">
    <property type="protein sequence ID" value="DAA06888.1"/>
    <property type="molecule type" value="Genomic_DNA"/>
</dbReference>
<dbReference type="PIR" id="S46692">
    <property type="entry name" value="S46692"/>
</dbReference>
<dbReference type="RefSeq" id="NP_012066.1">
    <property type="nucleotide sequence ID" value="NM_001179327.1"/>
</dbReference>
<dbReference type="PDB" id="5WLC">
    <property type="method" value="EM"/>
    <property type="resolution" value="3.80 A"/>
    <property type="chains" value="LK=1-575"/>
</dbReference>
<dbReference type="PDB" id="6KE6">
    <property type="method" value="EM"/>
    <property type="resolution" value="3.40 A"/>
    <property type="chains" value="A9=1-575"/>
</dbReference>
<dbReference type="PDB" id="6LQP">
    <property type="method" value="EM"/>
    <property type="resolution" value="3.20 A"/>
    <property type="chains" value="A9=1-575"/>
</dbReference>
<dbReference type="PDB" id="6LQQ">
    <property type="method" value="EM"/>
    <property type="resolution" value="4.10 A"/>
    <property type="chains" value="A9=1-575"/>
</dbReference>
<dbReference type="PDB" id="6LQR">
    <property type="method" value="EM"/>
    <property type="resolution" value="8.60 A"/>
    <property type="chains" value="A9=1-575"/>
</dbReference>
<dbReference type="PDB" id="6LQS">
    <property type="method" value="EM"/>
    <property type="resolution" value="3.80 A"/>
    <property type="chains" value="A9=1-575"/>
</dbReference>
<dbReference type="PDB" id="6LQT">
    <property type="method" value="EM"/>
    <property type="resolution" value="4.90 A"/>
    <property type="chains" value="A9=1-575"/>
</dbReference>
<dbReference type="PDB" id="6LQU">
    <property type="method" value="EM"/>
    <property type="resolution" value="3.70 A"/>
    <property type="chains" value="A9=1-575"/>
</dbReference>
<dbReference type="PDB" id="6LQV">
    <property type="method" value="EM"/>
    <property type="resolution" value="4.80 A"/>
    <property type="chains" value="A9=1-575"/>
</dbReference>
<dbReference type="PDB" id="6ND4">
    <property type="method" value="EM"/>
    <property type="resolution" value="4.30 A"/>
    <property type="chains" value="K=428-575"/>
</dbReference>
<dbReference type="PDB" id="6ZQA">
    <property type="method" value="EM"/>
    <property type="resolution" value="4.40 A"/>
    <property type="chains" value="UI=1-575"/>
</dbReference>
<dbReference type="PDB" id="6ZQB">
    <property type="method" value="EM"/>
    <property type="resolution" value="3.90 A"/>
    <property type="chains" value="UI=1-575"/>
</dbReference>
<dbReference type="PDB" id="6ZQC">
    <property type="method" value="EM"/>
    <property type="resolution" value="3.80 A"/>
    <property type="chains" value="UI=1-575"/>
</dbReference>
<dbReference type="PDB" id="6ZQD">
    <property type="method" value="EM"/>
    <property type="resolution" value="3.80 A"/>
    <property type="chains" value="UI=1-575"/>
</dbReference>
<dbReference type="PDB" id="6ZQE">
    <property type="method" value="EM"/>
    <property type="resolution" value="7.10 A"/>
    <property type="chains" value="UE=1-575"/>
</dbReference>
<dbReference type="PDB" id="7AJT">
    <property type="method" value="EM"/>
    <property type="resolution" value="4.60 A"/>
    <property type="chains" value="UI=1-575"/>
</dbReference>
<dbReference type="PDB" id="7AJU">
    <property type="method" value="EM"/>
    <property type="resolution" value="3.80 A"/>
    <property type="chains" value="UI=1-575"/>
</dbReference>
<dbReference type="PDB" id="7D4I">
    <property type="method" value="EM"/>
    <property type="resolution" value="4.00 A"/>
    <property type="chains" value="A9=1-575"/>
</dbReference>
<dbReference type="PDB" id="7D5S">
    <property type="method" value="EM"/>
    <property type="resolution" value="4.60 A"/>
    <property type="chains" value="A9=1-575"/>
</dbReference>
<dbReference type="PDB" id="7D63">
    <property type="method" value="EM"/>
    <property type="resolution" value="12.30 A"/>
    <property type="chains" value="A9=1-575"/>
</dbReference>
<dbReference type="PDB" id="7SUK">
    <property type="method" value="EM"/>
    <property type="resolution" value="3.99 A"/>
    <property type="chains" value="LK=428-515"/>
</dbReference>
<dbReference type="PDBsum" id="5WLC"/>
<dbReference type="PDBsum" id="6KE6"/>
<dbReference type="PDBsum" id="6LQP"/>
<dbReference type="PDBsum" id="6LQQ"/>
<dbReference type="PDBsum" id="6LQR"/>
<dbReference type="PDBsum" id="6LQS"/>
<dbReference type="PDBsum" id="6LQT"/>
<dbReference type="PDBsum" id="6LQU"/>
<dbReference type="PDBsum" id="6LQV"/>
<dbReference type="PDBsum" id="6ND4"/>
<dbReference type="PDBsum" id="6ZQA"/>
<dbReference type="PDBsum" id="6ZQB"/>
<dbReference type="PDBsum" id="6ZQC"/>
<dbReference type="PDBsum" id="6ZQD"/>
<dbReference type="PDBsum" id="6ZQE"/>
<dbReference type="PDBsum" id="7AJT"/>
<dbReference type="PDBsum" id="7AJU"/>
<dbReference type="PDBsum" id="7D4I"/>
<dbReference type="PDBsum" id="7D5S"/>
<dbReference type="PDBsum" id="7D63"/>
<dbReference type="PDBsum" id="7SUK"/>
<dbReference type="EMDB" id="EMD-0441"/>
<dbReference type="EMDB" id="EMD-0949"/>
<dbReference type="EMDB" id="EMD-0950"/>
<dbReference type="EMDB" id="EMD-0951"/>
<dbReference type="EMDB" id="EMD-0952"/>
<dbReference type="EMDB" id="EMD-0953"/>
<dbReference type="EMDB" id="EMD-0954"/>
<dbReference type="EMDB" id="EMD-0955"/>
<dbReference type="EMDB" id="EMD-11357"/>
<dbReference type="EMDB" id="EMD-11358"/>
<dbReference type="EMDB" id="EMD-11359"/>
<dbReference type="EMDB" id="EMD-11360"/>
<dbReference type="EMDB" id="EMD-11361"/>
<dbReference type="EMDB" id="EMD-11807"/>
<dbReference type="EMDB" id="EMD-11808"/>
<dbReference type="EMDB" id="EMD-25441"/>
<dbReference type="EMDB" id="EMD-30574"/>
<dbReference type="EMDB" id="EMD-30584"/>
<dbReference type="EMDB" id="EMD-30588"/>
<dbReference type="EMDB" id="EMD-8859"/>
<dbReference type="EMDB" id="EMD-9964"/>
<dbReference type="SMR" id="P38882"/>
<dbReference type="BioGRID" id="36630">
    <property type="interactions" value="388"/>
</dbReference>
<dbReference type="ComplexPortal" id="CPX-1409">
    <property type="entry name" value="UTP-A complex"/>
</dbReference>
<dbReference type="DIP" id="DIP-6634N"/>
<dbReference type="FunCoup" id="P38882">
    <property type="interactions" value="429"/>
</dbReference>
<dbReference type="IntAct" id="P38882">
    <property type="interactions" value="111"/>
</dbReference>
<dbReference type="MINT" id="P38882"/>
<dbReference type="STRING" id="4932.YHR196W"/>
<dbReference type="iPTMnet" id="P38882"/>
<dbReference type="PaxDb" id="4932-YHR196W"/>
<dbReference type="PeptideAtlas" id="P38882"/>
<dbReference type="EnsemblFungi" id="YHR196W_mRNA">
    <property type="protein sequence ID" value="YHR196W"/>
    <property type="gene ID" value="YHR196W"/>
</dbReference>
<dbReference type="GeneID" id="856603"/>
<dbReference type="KEGG" id="sce:YHR196W"/>
<dbReference type="AGR" id="SGD:S000001239"/>
<dbReference type="SGD" id="S000001239">
    <property type="gene designation" value="UTP9"/>
</dbReference>
<dbReference type="VEuPathDB" id="FungiDB:YHR196W"/>
<dbReference type="eggNOG" id="ENOG502QSYR">
    <property type="taxonomic scope" value="Eukaryota"/>
</dbReference>
<dbReference type="HOGENOM" id="CLU_037435_0_0_1"/>
<dbReference type="InParanoid" id="P38882"/>
<dbReference type="OMA" id="RFAFQAN"/>
<dbReference type="OrthoDB" id="30195at2759"/>
<dbReference type="BioCyc" id="YEAST:G3O-31224-MONOMER"/>
<dbReference type="BioGRID-ORCS" id="856603">
    <property type="hits" value="0 hits in 10 CRISPR screens"/>
</dbReference>
<dbReference type="PRO" id="PR:P38882"/>
<dbReference type="Proteomes" id="UP000002311">
    <property type="component" value="Chromosome VIII"/>
</dbReference>
<dbReference type="RNAct" id="P38882">
    <property type="molecule type" value="protein"/>
</dbReference>
<dbReference type="GO" id="GO:0030686">
    <property type="term" value="C:90S preribosome"/>
    <property type="evidence" value="ECO:0007005"/>
    <property type="project" value="SGD"/>
</dbReference>
<dbReference type="GO" id="GO:0005730">
    <property type="term" value="C:nucleolus"/>
    <property type="evidence" value="ECO:0000314"/>
    <property type="project" value="SGD"/>
</dbReference>
<dbReference type="GO" id="GO:0005634">
    <property type="term" value="C:nucleus"/>
    <property type="evidence" value="ECO:0007005"/>
    <property type="project" value="SGD"/>
</dbReference>
<dbReference type="GO" id="GO:0033553">
    <property type="term" value="C:rDNA heterochromatin"/>
    <property type="evidence" value="ECO:0000314"/>
    <property type="project" value="SGD"/>
</dbReference>
<dbReference type="GO" id="GO:0032040">
    <property type="term" value="C:small-subunit processome"/>
    <property type="evidence" value="ECO:0000314"/>
    <property type="project" value="SGD"/>
</dbReference>
<dbReference type="GO" id="GO:0034455">
    <property type="term" value="C:t-UTP complex"/>
    <property type="evidence" value="ECO:0000314"/>
    <property type="project" value="SGD"/>
</dbReference>
<dbReference type="GO" id="GO:0000049">
    <property type="term" value="F:tRNA binding"/>
    <property type="evidence" value="ECO:0000314"/>
    <property type="project" value="SGD"/>
</dbReference>
<dbReference type="GO" id="GO:0034511">
    <property type="term" value="F:U3 snoRNA binding"/>
    <property type="evidence" value="ECO:0000314"/>
    <property type="project" value="SGD"/>
</dbReference>
<dbReference type="GO" id="GO:0030490">
    <property type="term" value="P:maturation of SSU-rRNA"/>
    <property type="evidence" value="ECO:0000303"/>
    <property type="project" value="ComplexPortal"/>
</dbReference>
<dbReference type="GO" id="GO:0000462">
    <property type="term" value="P:maturation of SSU-rRNA from tricistronic rRNA transcript (SSU-rRNA, 5.8S rRNA, LSU-rRNA)"/>
    <property type="evidence" value="ECO:0000315"/>
    <property type="project" value="SGD"/>
</dbReference>
<dbReference type="GO" id="GO:0045943">
    <property type="term" value="P:positive regulation of transcription by RNA polymerase I"/>
    <property type="evidence" value="ECO:0000315"/>
    <property type="project" value="SGD"/>
</dbReference>
<dbReference type="GO" id="GO:0071528">
    <property type="term" value="P:tRNA re-export from nucleus"/>
    <property type="evidence" value="ECO:0000315"/>
    <property type="project" value="SGD"/>
</dbReference>
<dbReference type="Gene3D" id="2.130.10.10">
    <property type="entry name" value="YVTN repeat-like/Quinoprotein amine dehydrogenase"/>
    <property type="match status" value="1"/>
</dbReference>
<dbReference type="InterPro" id="IPR015943">
    <property type="entry name" value="WD40/YVTN_repeat-like_dom_sf"/>
</dbReference>
<dbReference type="SUPFAM" id="SSF69322">
    <property type="entry name" value="Tricorn protease domain 2"/>
    <property type="match status" value="1"/>
</dbReference>
<proteinExistence type="evidence at protein level"/>
<feature type="chain" id="PRO_0000065744" description="U3 small nucleolar RNA-associated protein 9">
    <location>
        <begin position="1"/>
        <end position="575"/>
    </location>
</feature>
<feature type="region of interest" description="Disordered" evidence="1">
    <location>
        <begin position="340"/>
        <end position="375"/>
    </location>
</feature>
<feature type="compositionally biased region" description="Basic and acidic residues" evidence="1">
    <location>
        <begin position="340"/>
        <end position="355"/>
    </location>
</feature>
<feature type="compositionally biased region" description="Basic and acidic residues" evidence="1">
    <location>
        <begin position="364"/>
        <end position="375"/>
    </location>
</feature>
<feature type="modified residue" description="Phosphoserine" evidence="5">
    <location>
        <position position="547"/>
    </location>
</feature>
<feature type="modified residue" description="Phosphoserine" evidence="5">
    <location>
        <position position="564"/>
    </location>
</feature>
<organism>
    <name type="scientific">Saccharomyces cerevisiae (strain ATCC 204508 / S288c)</name>
    <name type="common">Baker's yeast</name>
    <dbReference type="NCBI Taxonomy" id="559292"/>
    <lineage>
        <taxon>Eukaryota</taxon>
        <taxon>Fungi</taxon>
        <taxon>Dikarya</taxon>
        <taxon>Ascomycota</taxon>
        <taxon>Saccharomycotina</taxon>
        <taxon>Saccharomycetes</taxon>
        <taxon>Saccharomycetales</taxon>
        <taxon>Saccharomycetaceae</taxon>
        <taxon>Saccharomyces</taxon>
    </lineage>
</organism>
<evidence type="ECO:0000256" key="1">
    <source>
        <dbReference type="SAM" id="MobiDB-lite"/>
    </source>
</evidence>
<evidence type="ECO:0000269" key="2">
    <source>
    </source>
</evidence>
<evidence type="ECO:0000269" key="3">
    <source>
    </source>
</evidence>
<evidence type="ECO:0000269" key="4">
    <source>
    </source>
</evidence>
<evidence type="ECO:0007744" key="5">
    <source>
    </source>
</evidence>
<gene>
    <name type="primary">UTP9</name>
    <name type="ordered locus">YHR196W</name>
</gene>